<evidence type="ECO:0000255" key="1">
    <source>
        <dbReference type="HAMAP-Rule" id="MF_01152"/>
    </source>
</evidence>
<evidence type="ECO:0000256" key="2">
    <source>
        <dbReference type="SAM" id="MobiDB-lite"/>
    </source>
</evidence>
<feature type="chain" id="PRO_1000137648" description="Chaperone protein DnaJ">
    <location>
        <begin position="1"/>
        <end position="370"/>
    </location>
</feature>
<feature type="domain" description="J" evidence="1">
    <location>
        <begin position="5"/>
        <end position="70"/>
    </location>
</feature>
<feature type="repeat" description="CXXCXGXG motif">
    <location>
        <begin position="147"/>
        <end position="154"/>
    </location>
</feature>
<feature type="repeat" description="CXXCXGXG motif">
    <location>
        <begin position="164"/>
        <end position="171"/>
    </location>
</feature>
<feature type="repeat" description="CXXCXGXG motif">
    <location>
        <begin position="186"/>
        <end position="193"/>
    </location>
</feature>
<feature type="repeat" description="CXXCXGXG motif">
    <location>
        <begin position="200"/>
        <end position="207"/>
    </location>
</feature>
<feature type="zinc finger region" description="CR-type" evidence="1">
    <location>
        <begin position="134"/>
        <end position="212"/>
    </location>
</feature>
<feature type="region of interest" description="Disordered" evidence="2">
    <location>
        <begin position="351"/>
        <end position="370"/>
    </location>
</feature>
<feature type="binding site" evidence="1">
    <location>
        <position position="147"/>
    </location>
    <ligand>
        <name>Zn(2+)</name>
        <dbReference type="ChEBI" id="CHEBI:29105"/>
        <label>1</label>
    </ligand>
</feature>
<feature type="binding site" evidence="1">
    <location>
        <position position="150"/>
    </location>
    <ligand>
        <name>Zn(2+)</name>
        <dbReference type="ChEBI" id="CHEBI:29105"/>
        <label>1</label>
    </ligand>
</feature>
<feature type="binding site" evidence="1">
    <location>
        <position position="164"/>
    </location>
    <ligand>
        <name>Zn(2+)</name>
        <dbReference type="ChEBI" id="CHEBI:29105"/>
        <label>2</label>
    </ligand>
</feature>
<feature type="binding site" evidence="1">
    <location>
        <position position="167"/>
    </location>
    <ligand>
        <name>Zn(2+)</name>
        <dbReference type="ChEBI" id="CHEBI:29105"/>
        <label>2</label>
    </ligand>
</feature>
<feature type="binding site" evidence="1">
    <location>
        <position position="186"/>
    </location>
    <ligand>
        <name>Zn(2+)</name>
        <dbReference type="ChEBI" id="CHEBI:29105"/>
        <label>2</label>
    </ligand>
</feature>
<feature type="binding site" evidence="1">
    <location>
        <position position="189"/>
    </location>
    <ligand>
        <name>Zn(2+)</name>
        <dbReference type="ChEBI" id="CHEBI:29105"/>
        <label>2</label>
    </ligand>
</feature>
<feature type="binding site" evidence="1">
    <location>
        <position position="200"/>
    </location>
    <ligand>
        <name>Zn(2+)</name>
        <dbReference type="ChEBI" id="CHEBI:29105"/>
        <label>1</label>
    </ligand>
</feature>
<feature type="binding site" evidence="1">
    <location>
        <position position="203"/>
    </location>
    <ligand>
        <name>Zn(2+)</name>
        <dbReference type="ChEBI" id="CHEBI:29105"/>
        <label>1</label>
    </ligand>
</feature>
<comment type="function">
    <text evidence="1">Participates actively in the response to hyperosmotic and heat shock by preventing the aggregation of stress-denatured proteins and by disaggregating proteins, also in an autonomous, DnaK-independent fashion. Unfolded proteins bind initially to DnaJ; upon interaction with the DnaJ-bound protein, DnaK hydrolyzes its bound ATP, resulting in the formation of a stable complex. GrpE releases ADP from DnaK; ATP binding to DnaK triggers the release of the substrate protein, thus completing the reaction cycle. Several rounds of ATP-dependent interactions between DnaJ, DnaK and GrpE are required for fully efficient folding. Also involved, together with DnaK and GrpE, in the DNA replication of plasmids through activation of initiation proteins.</text>
</comment>
<comment type="cofactor">
    <cofactor evidence="1">
        <name>Zn(2+)</name>
        <dbReference type="ChEBI" id="CHEBI:29105"/>
    </cofactor>
    <text evidence="1">Binds 2 Zn(2+) ions per monomer.</text>
</comment>
<comment type="subunit">
    <text evidence="1">Homodimer.</text>
</comment>
<comment type="subcellular location">
    <subcellularLocation>
        <location evidence="1">Cytoplasm</location>
    </subcellularLocation>
</comment>
<comment type="domain">
    <text evidence="1">The J domain is necessary and sufficient to stimulate DnaK ATPase activity. Zinc center 1 plays an important role in the autonomous, DnaK-independent chaperone activity of DnaJ. Zinc center 2 is essential for interaction with DnaK and for DnaJ activity.</text>
</comment>
<comment type="similarity">
    <text evidence="1">Belongs to the DnaJ family.</text>
</comment>
<organism>
    <name type="scientific">Acinetobacter baumannii (strain AB0057)</name>
    <dbReference type="NCBI Taxonomy" id="480119"/>
    <lineage>
        <taxon>Bacteria</taxon>
        <taxon>Pseudomonadati</taxon>
        <taxon>Pseudomonadota</taxon>
        <taxon>Gammaproteobacteria</taxon>
        <taxon>Moraxellales</taxon>
        <taxon>Moraxellaceae</taxon>
        <taxon>Acinetobacter</taxon>
        <taxon>Acinetobacter calcoaceticus/baumannii complex</taxon>
    </lineage>
</organism>
<reference key="1">
    <citation type="journal article" date="2008" name="J. Bacteriol.">
        <title>Comparative genome sequence analysis of multidrug-resistant Acinetobacter baumannii.</title>
        <authorList>
            <person name="Adams M.D."/>
            <person name="Goglin K."/>
            <person name="Molyneaux N."/>
            <person name="Hujer K.M."/>
            <person name="Lavender H."/>
            <person name="Jamison J.J."/>
            <person name="MacDonald I.J."/>
            <person name="Martin K.M."/>
            <person name="Russo T."/>
            <person name="Campagnari A.A."/>
            <person name="Hujer A.M."/>
            <person name="Bonomo R.A."/>
            <person name="Gill S.R."/>
        </authorList>
    </citation>
    <scope>NUCLEOTIDE SEQUENCE [LARGE SCALE GENOMIC DNA]</scope>
    <source>
        <strain>AB0057</strain>
    </source>
</reference>
<sequence>MAKRDYYEVLGVSKTASDDEIKKAYRKLAMKYHPDRNPDNAEAEEKFKEASEAYEILSDSEKRSMYDRMGHNAFEGGFGGAGGGFGGFSAEDIFSQFGDIFGGAFGGGGRQQRQRRGSDLRYVMELTLEEAVKGVKKTITFTAPAPCDVCDGKGSKNPKDVETCKTCHGSGQVRMQQGFFSVQQTCGTCRGQGKIIKNPCHACHGSGVADRQQTLEVTIPAGVDNGDRVRLSGKGEAIRDGQAGDLYVEVVVREHEIFQRDGADLYMDVPVSIADAALGKEIEIPTLEGRVSLKIPEGTQTGKLFRLRGKGVRPVRSSMVGDLLCRIVVETPVNLTSRQRELLKELQASFDGEDSASSPKKKSFFDRLFD</sequence>
<accession>B7I2B2</accession>
<name>DNAJ_ACIB5</name>
<keyword id="KW-0143">Chaperone</keyword>
<keyword id="KW-0963">Cytoplasm</keyword>
<keyword id="KW-0235">DNA replication</keyword>
<keyword id="KW-0479">Metal-binding</keyword>
<keyword id="KW-0677">Repeat</keyword>
<keyword id="KW-0346">Stress response</keyword>
<keyword id="KW-0862">Zinc</keyword>
<keyword id="KW-0863">Zinc-finger</keyword>
<proteinExistence type="inferred from homology"/>
<protein>
    <recommendedName>
        <fullName evidence="1">Chaperone protein DnaJ</fullName>
    </recommendedName>
</protein>
<gene>
    <name evidence="1" type="primary">dnaJ</name>
    <name type="ordered locus">AB57_3901</name>
</gene>
<dbReference type="EMBL" id="CP001182">
    <property type="protein sequence ID" value="ACJ42829.1"/>
    <property type="molecule type" value="Genomic_DNA"/>
</dbReference>
<dbReference type="RefSeq" id="WP_001119029.1">
    <property type="nucleotide sequence ID" value="NC_011586.2"/>
</dbReference>
<dbReference type="SMR" id="B7I2B2"/>
<dbReference type="GeneID" id="92895684"/>
<dbReference type="KEGG" id="abn:AB57_3901"/>
<dbReference type="HOGENOM" id="CLU_017633_0_7_6"/>
<dbReference type="Proteomes" id="UP000007094">
    <property type="component" value="Chromosome"/>
</dbReference>
<dbReference type="GO" id="GO:0005737">
    <property type="term" value="C:cytoplasm"/>
    <property type="evidence" value="ECO:0007669"/>
    <property type="project" value="UniProtKB-SubCell"/>
</dbReference>
<dbReference type="GO" id="GO:0005524">
    <property type="term" value="F:ATP binding"/>
    <property type="evidence" value="ECO:0007669"/>
    <property type="project" value="InterPro"/>
</dbReference>
<dbReference type="GO" id="GO:0031072">
    <property type="term" value="F:heat shock protein binding"/>
    <property type="evidence" value="ECO:0007669"/>
    <property type="project" value="InterPro"/>
</dbReference>
<dbReference type="GO" id="GO:0051082">
    <property type="term" value="F:unfolded protein binding"/>
    <property type="evidence" value="ECO:0007669"/>
    <property type="project" value="UniProtKB-UniRule"/>
</dbReference>
<dbReference type="GO" id="GO:0008270">
    <property type="term" value="F:zinc ion binding"/>
    <property type="evidence" value="ECO:0007669"/>
    <property type="project" value="UniProtKB-UniRule"/>
</dbReference>
<dbReference type="GO" id="GO:0051085">
    <property type="term" value="P:chaperone cofactor-dependent protein refolding"/>
    <property type="evidence" value="ECO:0007669"/>
    <property type="project" value="TreeGrafter"/>
</dbReference>
<dbReference type="GO" id="GO:0006260">
    <property type="term" value="P:DNA replication"/>
    <property type="evidence" value="ECO:0007669"/>
    <property type="project" value="UniProtKB-KW"/>
</dbReference>
<dbReference type="GO" id="GO:0042026">
    <property type="term" value="P:protein refolding"/>
    <property type="evidence" value="ECO:0007669"/>
    <property type="project" value="TreeGrafter"/>
</dbReference>
<dbReference type="GO" id="GO:0009408">
    <property type="term" value="P:response to heat"/>
    <property type="evidence" value="ECO:0007669"/>
    <property type="project" value="InterPro"/>
</dbReference>
<dbReference type="CDD" id="cd06257">
    <property type="entry name" value="DnaJ"/>
    <property type="match status" value="1"/>
</dbReference>
<dbReference type="CDD" id="cd10747">
    <property type="entry name" value="DnaJ_C"/>
    <property type="match status" value="1"/>
</dbReference>
<dbReference type="CDD" id="cd10719">
    <property type="entry name" value="DnaJ_zf"/>
    <property type="match status" value="1"/>
</dbReference>
<dbReference type="FunFam" id="1.10.287.110:FF:000034">
    <property type="entry name" value="Chaperone protein DnaJ"/>
    <property type="match status" value="1"/>
</dbReference>
<dbReference type="FunFam" id="2.10.230.10:FF:000002">
    <property type="entry name" value="Molecular chaperone DnaJ"/>
    <property type="match status" value="1"/>
</dbReference>
<dbReference type="FunFam" id="2.60.260.20:FF:000004">
    <property type="entry name" value="Molecular chaperone DnaJ"/>
    <property type="match status" value="1"/>
</dbReference>
<dbReference type="Gene3D" id="1.10.287.110">
    <property type="entry name" value="DnaJ domain"/>
    <property type="match status" value="1"/>
</dbReference>
<dbReference type="Gene3D" id="2.10.230.10">
    <property type="entry name" value="Heat shock protein DnaJ, cysteine-rich domain"/>
    <property type="match status" value="1"/>
</dbReference>
<dbReference type="Gene3D" id="2.60.260.20">
    <property type="entry name" value="Urease metallochaperone UreE, N-terminal domain"/>
    <property type="match status" value="2"/>
</dbReference>
<dbReference type="HAMAP" id="MF_01152">
    <property type="entry name" value="DnaJ"/>
    <property type="match status" value="1"/>
</dbReference>
<dbReference type="InterPro" id="IPR012724">
    <property type="entry name" value="DnaJ"/>
</dbReference>
<dbReference type="InterPro" id="IPR002939">
    <property type="entry name" value="DnaJ_C"/>
</dbReference>
<dbReference type="InterPro" id="IPR001623">
    <property type="entry name" value="DnaJ_domain"/>
</dbReference>
<dbReference type="InterPro" id="IPR018253">
    <property type="entry name" value="DnaJ_domain_CS"/>
</dbReference>
<dbReference type="InterPro" id="IPR008971">
    <property type="entry name" value="HSP40/DnaJ_pept-bd"/>
</dbReference>
<dbReference type="InterPro" id="IPR001305">
    <property type="entry name" value="HSP_DnaJ_Cys-rich_dom"/>
</dbReference>
<dbReference type="InterPro" id="IPR036410">
    <property type="entry name" value="HSP_DnaJ_Cys-rich_dom_sf"/>
</dbReference>
<dbReference type="InterPro" id="IPR036869">
    <property type="entry name" value="J_dom_sf"/>
</dbReference>
<dbReference type="NCBIfam" id="TIGR02349">
    <property type="entry name" value="DnaJ_bact"/>
    <property type="match status" value="1"/>
</dbReference>
<dbReference type="NCBIfam" id="NF008035">
    <property type="entry name" value="PRK10767.1"/>
    <property type="match status" value="1"/>
</dbReference>
<dbReference type="PANTHER" id="PTHR43096:SF48">
    <property type="entry name" value="CHAPERONE PROTEIN DNAJ"/>
    <property type="match status" value="1"/>
</dbReference>
<dbReference type="PANTHER" id="PTHR43096">
    <property type="entry name" value="DNAJ HOMOLOG 1, MITOCHONDRIAL-RELATED"/>
    <property type="match status" value="1"/>
</dbReference>
<dbReference type="Pfam" id="PF00226">
    <property type="entry name" value="DnaJ"/>
    <property type="match status" value="1"/>
</dbReference>
<dbReference type="Pfam" id="PF01556">
    <property type="entry name" value="DnaJ_C"/>
    <property type="match status" value="1"/>
</dbReference>
<dbReference type="Pfam" id="PF00684">
    <property type="entry name" value="DnaJ_CXXCXGXG"/>
    <property type="match status" value="1"/>
</dbReference>
<dbReference type="PRINTS" id="PR00625">
    <property type="entry name" value="JDOMAIN"/>
</dbReference>
<dbReference type="SMART" id="SM00271">
    <property type="entry name" value="DnaJ"/>
    <property type="match status" value="1"/>
</dbReference>
<dbReference type="SUPFAM" id="SSF46565">
    <property type="entry name" value="Chaperone J-domain"/>
    <property type="match status" value="1"/>
</dbReference>
<dbReference type="SUPFAM" id="SSF57938">
    <property type="entry name" value="DnaJ/Hsp40 cysteine-rich domain"/>
    <property type="match status" value="1"/>
</dbReference>
<dbReference type="SUPFAM" id="SSF49493">
    <property type="entry name" value="HSP40/DnaJ peptide-binding domain"/>
    <property type="match status" value="2"/>
</dbReference>
<dbReference type="PROSITE" id="PS00636">
    <property type="entry name" value="DNAJ_1"/>
    <property type="match status" value="1"/>
</dbReference>
<dbReference type="PROSITE" id="PS50076">
    <property type="entry name" value="DNAJ_2"/>
    <property type="match status" value="1"/>
</dbReference>
<dbReference type="PROSITE" id="PS51188">
    <property type="entry name" value="ZF_CR"/>
    <property type="match status" value="1"/>
</dbReference>